<comment type="function">
    <text evidence="1">Catalyzes the NADPH-dependent reduction of ketopantoate into pantoic acid.</text>
</comment>
<comment type="catalytic activity">
    <reaction evidence="1">
        <text>(R)-pantoate + NADP(+) = 2-dehydropantoate + NADPH + H(+)</text>
        <dbReference type="Rhea" id="RHEA:16233"/>
        <dbReference type="ChEBI" id="CHEBI:11561"/>
        <dbReference type="ChEBI" id="CHEBI:15378"/>
        <dbReference type="ChEBI" id="CHEBI:15980"/>
        <dbReference type="ChEBI" id="CHEBI:57783"/>
        <dbReference type="ChEBI" id="CHEBI:58349"/>
        <dbReference type="EC" id="1.1.1.169"/>
    </reaction>
</comment>
<comment type="pathway">
    <text evidence="1">Cofactor biosynthesis; (R)-pantothenate biosynthesis; (R)-pantoate from 3-methyl-2-oxobutanoate: step 2/2.</text>
</comment>
<comment type="subunit">
    <text evidence="1">Monomer.</text>
</comment>
<comment type="subcellular location">
    <subcellularLocation>
        <location evidence="1">Cytoplasm</location>
    </subcellularLocation>
</comment>
<comment type="similarity">
    <text evidence="2">Belongs to the ketopantoate reductase family.</text>
</comment>
<organism>
    <name type="scientific">Salmonella typhi</name>
    <dbReference type="NCBI Taxonomy" id="90370"/>
    <lineage>
        <taxon>Bacteria</taxon>
        <taxon>Pseudomonadati</taxon>
        <taxon>Pseudomonadota</taxon>
        <taxon>Gammaproteobacteria</taxon>
        <taxon>Enterobacterales</taxon>
        <taxon>Enterobacteriaceae</taxon>
        <taxon>Salmonella</taxon>
    </lineage>
</organism>
<proteinExistence type="inferred from homology"/>
<protein>
    <recommendedName>
        <fullName evidence="1">2-dehydropantoate 2-reductase</fullName>
        <ecNumber evidence="1">1.1.1.169</ecNumber>
    </recommendedName>
    <alternativeName>
        <fullName evidence="1">Ketopantoate reductase</fullName>
        <shortName evidence="1">KPR</shortName>
    </alternativeName>
</protein>
<accession>Q8Z8W3</accession>
<keyword id="KW-0963">Cytoplasm</keyword>
<keyword id="KW-0521">NADP</keyword>
<keyword id="KW-0560">Oxidoreductase</keyword>
<keyword id="KW-0566">Pantothenate biosynthesis</keyword>
<evidence type="ECO:0000250" key="1">
    <source>
        <dbReference type="UniProtKB" id="P0A9J4"/>
    </source>
</evidence>
<evidence type="ECO:0000305" key="2"/>
<reference key="1">
    <citation type="journal article" date="2001" name="Nature">
        <title>Complete genome sequence of a multiple drug resistant Salmonella enterica serovar Typhi CT18.</title>
        <authorList>
            <person name="Parkhill J."/>
            <person name="Dougan G."/>
            <person name="James K.D."/>
            <person name="Thomson N.R."/>
            <person name="Pickard D."/>
            <person name="Wain J."/>
            <person name="Churcher C.M."/>
            <person name="Mungall K.L."/>
            <person name="Bentley S.D."/>
            <person name="Holden M.T.G."/>
            <person name="Sebaihia M."/>
            <person name="Baker S."/>
            <person name="Basham D."/>
            <person name="Brooks K."/>
            <person name="Chillingworth T."/>
            <person name="Connerton P."/>
            <person name="Cronin A."/>
            <person name="Davis P."/>
            <person name="Davies R.M."/>
            <person name="Dowd L."/>
            <person name="White N."/>
            <person name="Farrar J."/>
            <person name="Feltwell T."/>
            <person name="Hamlin N."/>
            <person name="Haque A."/>
            <person name="Hien T.T."/>
            <person name="Holroyd S."/>
            <person name="Jagels K."/>
            <person name="Krogh A."/>
            <person name="Larsen T.S."/>
            <person name="Leather S."/>
            <person name="Moule S."/>
            <person name="O'Gaora P."/>
            <person name="Parry C."/>
            <person name="Quail M.A."/>
            <person name="Rutherford K.M."/>
            <person name="Simmonds M."/>
            <person name="Skelton J."/>
            <person name="Stevens K."/>
            <person name="Whitehead S."/>
            <person name="Barrell B.G."/>
        </authorList>
    </citation>
    <scope>NUCLEOTIDE SEQUENCE [LARGE SCALE GENOMIC DNA]</scope>
    <source>
        <strain>CT18</strain>
    </source>
</reference>
<reference key="2">
    <citation type="journal article" date="2003" name="J. Bacteriol.">
        <title>Comparative genomics of Salmonella enterica serovar Typhi strains Ty2 and CT18.</title>
        <authorList>
            <person name="Deng W."/>
            <person name="Liou S.-R."/>
            <person name="Plunkett G. III"/>
            <person name="Mayhew G.F."/>
            <person name="Rose D.J."/>
            <person name="Burland V."/>
            <person name="Kodoyianni V."/>
            <person name="Schwartz D.C."/>
            <person name="Blattner F.R."/>
        </authorList>
    </citation>
    <scope>NUCLEOTIDE SEQUENCE [LARGE SCALE GENOMIC DNA]</scope>
    <source>
        <strain>ATCC 700931 / Ty2</strain>
    </source>
</reference>
<feature type="chain" id="PRO_0000157303" description="2-dehydropantoate 2-reductase">
    <location>
        <begin position="1"/>
        <end position="303"/>
    </location>
</feature>
<feature type="active site" description="Proton donor" evidence="1">
    <location>
        <position position="176"/>
    </location>
</feature>
<feature type="binding site" evidence="1">
    <location>
        <begin position="7"/>
        <end position="12"/>
    </location>
    <ligand>
        <name>NADP(+)</name>
        <dbReference type="ChEBI" id="CHEBI:58349"/>
    </ligand>
</feature>
<feature type="binding site" evidence="1">
    <location>
        <position position="98"/>
    </location>
    <ligand>
        <name>NADP(+)</name>
        <dbReference type="ChEBI" id="CHEBI:58349"/>
    </ligand>
</feature>
<feature type="binding site" evidence="1">
    <location>
        <position position="98"/>
    </location>
    <ligand>
        <name>substrate</name>
    </ligand>
</feature>
<feature type="binding site" evidence="1">
    <location>
        <position position="122"/>
    </location>
    <ligand>
        <name>NADP(+)</name>
        <dbReference type="ChEBI" id="CHEBI:58349"/>
    </ligand>
</feature>
<feature type="binding site" evidence="1">
    <location>
        <position position="180"/>
    </location>
    <ligand>
        <name>substrate</name>
    </ligand>
</feature>
<feature type="binding site" evidence="1">
    <location>
        <position position="184"/>
    </location>
    <ligand>
        <name>substrate</name>
    </ligand>
</feature>
<feature type="binding site" evidence="1">
    <location>
        <position position="194"/>
    </location>
    <ligand>
        <name>substrate</name>
    </ligand>
</feature>
<feature type="binding site" evidence="1">
    <location>
        <position position="244"/>
    </location>
    <ligand>
        <name>substrate</name>
    </ligand>
</feature>
<feature type="binding site" evidence="1">
    <location>
        <position position="256"/>
    </location>
    <ligand>
        <name>NADP(+)</name>
        <dbReference type="ChEBI" id="CHEBI:58349"/>
    </ligand>
</feature>
<feature type="sequence conflict" description="In Ref. 2; AAO70019." evidence="2" ref="2">
    <original>A</original>
    <variation>T</variation>
    <location>
        <position position="117"/>
    </location>
</feature>
<name>PANE_SALTI</name>
<sequence>MKITVLGCGALGQLWLSALCKHGHDVQGWLRVPQPYCSVNLIDTDGSFFNESLTANDPDFLAKSELLLVTLKAWQVSDAVRTLASTLPVTSPILLIHNGMGTIEELQSIQQPMLMGAITHAARRDGNIIIHVANGTTHIGPAREQDGDYSYLAEILQGVLPDVAWHNNIRAEMWRKLAVNCVINPLTALWNCPNGELRHHTDEINAICEEVAAVIEREGYHTSADDLCYYVEQVIDSTAENISSMLQDVRAMRHTEIDYITGYLLKRARVHGLAVPENSRLFEMVKRKESEYERSGTGMPRPW</sequence>
<dbReference type="EC" id="1.1.1.169" evidence="1"/>
<dbReference type="EMBL" id="AL513382">
    <property type="protein sequence ID" value="CAD08890.1"/>
    <property type="molecule type" value="Genomic_DNA"/>
</dbReference>
<dbReference type="EMBL" id="AE014613">
    <property type="protein sequence ID" value="AAO70019.1"/>
    <property type="molecule type" value="Genomic_DNA"/>
</dbReference>
<dbReference type="RefSeq" id="NP_455028.1">
    <property type="nucleotide sequence ID" value="NC_003198.1"/>
</dbReference>
<dbReference type="RefSeq" id="WP_000705818.1">
    <property type="nucleotide sequence ID" value="NZ_QXGZ01000026.1"/>
</dbReference>
<dbReference type="SMR" id="Q8Z8W3"/>
<dbReference type="STRING" id="220341.gene:17584495"/>
<dbReference type="KEGG" id="stt:t2430"/>
<dbReference type="KEGG" id="sty:STY0473"/>
<dbReference type="PATRIC" id="fig|220341.7.peg.474"/>
<dbReference type="eggNOG" id="COG1893">
    <property type="taxonomic scope" value="Bacteria"/>
</dbReference>
<dbReference type="HOGENOM" id="CLU_031468_0_1_6"/>
<dbReference type="OMA" id="ANYSSMY"/>
<dbReference type="UniPathway" id="UPA00028">
    <property type="reaction ID" value="UER00004"/>
</dbReference>
<dbReference type="Proteomes" id="UP000000541">
    <property type="component" value="Chromosome"/>
</dbReference>
<dbReference type="Proteomes" id="UP000002670">
    <property type="component" value="Chromosome"/>
</dbReference>
<dbReference type="GO" id="GO:0005737">
    <property type="term" value="C:cytoplasm"/>
    <property type="evidence" value="ECO:0007669"/>
    <property type="project" value="UniProtKB-SubCell"/>
</dbReference>
<dbReference type="GO" id="GO:0008677">
    <property type="term" value="F:2-dehydropantoate 2-reductase activity"/>
    <property type="evidence" value="ECO:0007669"/>
    <property type="project" value="UniProtKB-EC"/>
</dbReference>
<dbReference type="GO" id="GO:0050661">
    <property type="term" value="F:NADP binding"/>
    <property type="evidence" value="ECO:0007669"/>
    <property type="project" value="TreeGrafter"/>
</dbReference>
<dbReference type="GO" id="GO:0015940">
    <property type="term" value="P:pantothenate biosynthetic process"/>
    <property type="evidence" value="ECO:0007669"/>
    <property type="project" value="UniProtKB-UniPathway"/>
</dbReference>
<dbReference type="FunFam" id="1.10.1040.10:FF:000014">
    <property type="entry name" value="2-dehydropantoate 2-reductase"/>
    <property type="match status" value="1"/>
</dbReference>
<dbReference type="FunFam" id="3.40.50.720:FF:000162">
    <property type="entry name" value="2-dehydropantoate 2-reductase"/>
    <property type="match status" value="1"/>
</dbReference>
<dbReference type="Gene3D" id="1.10.1040.10">
    <property type="entry name" value="N-(1-d-carboxylethyl)-l-norvaline Dehydrogenase, domain 2"/>
    <property type="match status" value="1"/>
</dbReference>
<dbReference type="Gene3D" id="3.40.50.720">
    <property type="entry name" value="NAD(P)-binding Rossmann-like Domain"/>
    <property type="match status" value="1"/>
</dbReference>
<dbReference type="InterPro" id="IPR008927">
    <property type="entry name" value="6-PGluconate_DH-like_C_sf"/>
</dbReference>
<dbReference type="InterPro" id="IPR013328">
    <property type="entry name" value="6PGD_dom2"/>
</dbReference>
<dbReference type="InterPro" id="IPR003710">
    <property type="entry name" value="ApbA"/>
</dbReference>
<dbReference type="InterPro" id="IPR050838">
    <property type="entry name" value="Ketopantoate_reductase"/>
</dbReference>
<dbReference type="InterPro" id="IPR013752">
    <property type="entry name" value="KPA_reductase"/>
</dbReference>
<dbReference type="InterPro" id="IPR013332">
    <property type="entry name" value="KPR_N"/>
</dbReference>
<dbReference type="InterPro" id="IPR036291">
    <property type="entry name" value="NAD(P)-bd_dom_sf"/>
</dbReference>
<dbReference type="NCBIfam" id="TIGR00745">
    <property type="entry name" value="apbA_panE"/>
    <property type="match status" value="1"/>
</dbReference>
<dbReference type="NCBIfam" id="NF005087">
    <property type="entry name" value="PRK06522.1-1"/>
    <property type="match status" value="1"/>
</dbReference>
<dbReference type="PANTHER" id="PTHR43765:SF2">
    <property type="entry name" value="2-DEHYDROPANTOATE 2-REDUCTASE"/>
    <property type="match status" value="1"/>
</dbReference>
<dbReference type="PANTHER" id="PTHR43765">
    <property type="entry name" value="2-DEHYDROPANTOATE 2-REDUCTASE-RELATED"/>
    <property type="match status" value="1"/>
</dbReference>
<dbReference type="Pfam" id="PF02558">
    <property type="entry name" value="ApbA"/>
    <property type="match status" value="1"/>
</dbReference>
<dbReference type="Pfam" id="PF08546">
    <property type="entry name" value="ApbA_C"/>
    <property type="match status" value="1"/>
</dbReference>
<dbReference type="SUPFAM" id="SSF48179">
    <property type="entry name" value="6-phosphogluconate dehydrogenase C-terminal domain-like"/>
    <property type="match status" value="1"/>
</dbReference>
<dbReference type="SUPFAM" id="SSF51735">
    <property type="entry name" value="NAD(P)-binding Rossmann-fold domains"/>
    <property type="match status" value="1"/>
</dbReference>
<gene>
    <name type="primary">panE</name>
    <name type="synonym">apbA</name>
    <name type="ordered locus">STY0473</name>
    <name type="ordered locus">t2430</name>
</gene>